<name>CIDA_STAAC</name>
<comment type="function">
    <text evidence="1">Increases the activity of extracellular murein hydrolases possibly by mediating their export via hole formation. Inhibited by the antiholin-like proteins LrgAB. In an unstressed cell, the LrgAB products probably inhibit the function of the CidAB proteins. When a cell is stressed by the addition of antibiotics or by other factors in the environment, the CidAB proteins possibly oligomerize within the bacterial cell membrane, creating lesions that disrupt the proton motive force, which in turn results in loss of cell viability. These lesions are also hypothesized to regulate the subsequent cell lysis by either allowing the murein hydrolases access to the cell wall substrate and/or regulating their activity by a possible change in the cell wall pH that results from loss of membrane potential.</text>
</comment>
<comment type="subcellular location">
    <subcellularLocation>
        <location evidence="1">Cell membrane</location>
        <topology evidence="1">Multi-pass membrane protein</topology>
    </subcellularLocation>
</comment>
<comment type="similarity">
    <text evidence="1">Belongs to the CidA/LrgA family. CidA subfamily.</text>
</comment>
<organism>
    <name type="scientific">Staphylococcus aureus (strain COL)</name>
    <dbReference type="NCBI Taxonomy" id="93062"/>
    <lineage>
        <taxon>Bacteria</taxon>
        <taxon>Bacillati</taxon>
        <taxon>Bacillota</taxon>
        <taxon>Bacilli</taxon>
        <taxon>Bacillales</taxon>
        <taxon>Staphylococcaceae</taxon>
        <taxon>Staphylococcus</taxon>
    </lineage>
</organism>
<gene>
    <name evidence="1" type="primary">cidA</name>
    <name type="ordered locus">SACOL2554.1</name>
</gene>
<protein>
    <recommendedName>
        <fullName evidence="1">Holin-like protein CidA</fullName>
    </recommendedName>
</protein>
<sequence length="131" mass="14730">MHKVQLIIKLLLQLGIIIVITYIGTEIQKIFHLPLAGSIVGLFLFYLLLQFKIVPLTWVEDGANFLLKTMVFFFIPSVVGIMDVASEITLNYILFFAVIIIGTCIVALSSGYIAEKMSVKHKHRKGVDAYE</sequence>
<reference key="1">
    <citation type="journal article" date="2005" name="J. Bacteriol.">
        <title>Insights on evolution of virulence and resistance from the complete genome analysis of an early methicillin-resistant Staphylococcus aureus strain and a biofilm-producing methicillin-resistant Staphylococcus epidermidis strain.</title>
        <authorList>
            <person name="Gill S.R."/>
            <person name="Fouts D.E."/>
            <person name="Archer G.L."/>
            <person name="Mongodin E.F."/>
            <person name="DeBoy R.T."/>
            <person name="Ravel J."/>
            <person name="Paulsen I.T."/>
            <person name="Kolonay J.F."/>
            <person name="Brinkac L.M."/>
            <person name="Beanan M.J."/>
            <person name="Dodson R.J."/>
            <person name="Daugherty S.C."/>
            <person name="Madupu R."/>
            <person name="Angiuoli S.V."/>
            <person name="Durkin A.S."/>
            <person name="Haft D.H."/>
            <person name="Vamathevan J.J."/>
            <person name="Khouri H."/>
            <person name="Utterback T.R."/>
            <person name="Lee C."/>
            <person name="Dimitrov G."/>
            <person name="Jiang L."/>
            <person name="Qin H."/>
            <person name="Weidman J."/>
            <person name="Tran K."/>
            <person name="Kang K.H."/>
            <person name="Hance I.R."/>
            <person name="Nelson K.E."/>
            <person name="Fraser C.M."/>
        </authorList>
    </citation>
    <scope>NUCLEOTIDE SEQUENCE [LARGE SCALE GENOMIC DNA]</scope>
    <source>
        <strain>COL</strain>
    </source>
</reference>
<proteinExistence type="inferred from homology"/>
<feature type="chain" id="PRO_0000213178" description="Holin-like protein CidA">
    <location>
        <begin position="1"/>
        <end position="131"/>
    </location>
</feature>
<feature type="transmembrane region" description="Helical" evidence="1">
    <location>
        <begin position="4"/>
        <end position="24"/>
    </location>
</feature>
<feature type="transmembrane region" description="Helical" evidence="1">
    <location>
        <begin position="30"/>
        <end position="50"/>
    </location>
</feature>
<feature type="transmembrane region" description="Helical" evidence="1">
    <location>
        <begin position="65"/>
        <end position="85"/>
    </location>
</feature>
<feature type="transmembrane region" description="Helical" evidence="1">
    <location>
        <begin position="88"/>
        <end position="108"/>
    </location>
</feature>
<accession>Q5HD10</accession>
<keyword id="KW-1003">Cell membrane</keyword>
<keyword id="KW-0204">Cytolysis</keyword>
<keyword id="KW-0472">Membrane</keyword>
<keyword id="KW-0812">Transmembrane</keyword>
<keyword id="KW-1133">Transmembrane helix</keyword>
<dbReference type="EMBL" id="CP000046">
    <property type="protein sequence ID" value="AAW37331.1"/>
    <property type="molecule type" value="Genomic_DNA"/>
</dbReference>
<dbReference type="RefSeq" id="WP_000549734.1">
    <property type="nucleotide sequence ID" value="NZ_JBGOFO010000001.1"/>
</dbReference>
<dbReference type="SMR" id="Q5HD10"/>
<dbReference type="KEGG" id="sac:SACOL2554_1"/>
<dbReference type="HOGENOM" id="CLU_113736_2_1_9"/>
<dbReference type="Proteomes" id="UP000000530">
    <property type="component" value="Chromosome"/>
</dbReference>
<dbReference type="GO" id="GO:0005886">
    <property type="term" value="C:plasma membrane"/>
    <property type="evidence" value="ECO:0007669"/>
    <property type="project" value="UniProtKB-SubCell"/>
</dbReference>
<dbReference type="GO" id="GO:0019835">
    <property type="term" value="P:cytolysis"/>
    <property type="evidence" value="ECO:0007669"/>
    <property type="project" value="UniProtKB-UniRule"/>
</dbReference>
<dbReference type="GO" id="GO:0031640">
    <property type="term" value="P:killing of cells of another organism"/>
    <property type="evidence" value="ECO:0007669"/>
    <property type="project" value="UniProtKB-KW"/>
</dbReference>
<dbReference type="GO" id="GO:0012501">
    <property type="term" value="P:programmed cell death"/>
    <property type="evidence" value="ECO:0007669"/>
    <property type="project" value="UniProtKB-UniRule"/>
</dbReference>
<dbReference type="HAMAP" id="MF_01143">
    <property type="entry name" value="CidA"/>
    <property type="match status" value="1"/>
</dbReference>
<dbReference type="InterPro" id="IPR023760">
    <property type="entry name" value="Holin-like_CidA"/>
</dbReference>
<dbReference type="InterPro" id="IPR005538">
    <property type="entry name" value="LrgA/CidA"/>
</dbReference>
<dbReference type="PANTHER" id="PTHR33931:SF2">
    <property type="entry name" value="HOLIN-LIKE PROTEIN CIDA"/>
    <property type="match status" value="1"/>
</dbReference>
<dbReference type="PANTHER" id="PTHR33931">
    <property type="entry name" value="HOLIN-LIKE PROTEIN CIDA-RELATED"/>
    <property type="match status" value="1"/>
</dbReference>
<dbReference type="Pfam" id="PF03788">
    <property type="entry name" value="LrgA"/>
    <property type="match status" value="1"/>
</dbReference>
<evidence type="ECO:0000255" key="1">
    <source>
        <dbReference type="HAMAP-Rule" id="MF_01143"/>
    </source>
</evidence>